<keyword id="KW-0227">DNA damage</keyword>
<keyword id="KW-0234">DNA repair</keyword>
<keyword id="KW-0235">DNA replication</keyword>
<keyword id="KW-0238">DNA-binding</keyword>
<keyword id="KW-0239">DNA-directed DNA polymerase</keyword>
<keyword id="KW-0269">Exonuclease</keyword>
<keyword id="KW-0378">Hydrolase</keyword>
<keyword id="KW-0540">Nuclease</keyword>
<keyword id="KW-0548">Nucleotidyltransferase</keyword>
<keyword id="KW-0808">Transferase</keyword>
<accession>Q92GB7</accession>
<organism>
    <name type="scientific">Rickettsia conorii (strain ATCC VR-613 / Malish 7)</name>
    <dbReference type="NCBI Taxonomy" id="272944"/>
    <lineage>
        <taxon>Bacteria</taxon>
        <taxon>Pseudomonadati</taxon>
        <taxon>Pseudomonadota</taxon>
        <taxon>Alphaproteobacteria</taxon>
        <taxon>Rickettsiales</taxon>
        <taxon>Rickettsiaceae</taxon>
        <taxon>Rickettsieae</taxon>
        <taxon>Rickettsia</taxon>
        <taxon>spotted fever group</taxon>
    </lineage>
</organism>
<sequence length="875" mass="99030">MTQKNTLLLIDGYGFVFRAYYAQQPLTSPKGEPVGALYGFTSMLLKLLSDFKPKHVAVVFDSGGKNFRHQIYPDYKANRPPPPEDLIIQLPLVRDVASNLNFPILEKNGYEADDIIATFATKTAALGAHVVIISSDKDLLQLMTENIKIYDPLKGKYITEDDVVKKFGTTSDKLREVMALIGDRSDNIPGVPSIGPKTASSLITQFGSVENIFNSLDQVSSVKQRETLQNSREAALISWQLIGLNSNVDLDFQLNNLEWSPPNSDKLTGFLQEYGFRSLYKRVENLLDIKINDHKEIADSKVTEIKELNNANELADFAKEATKIGIFGIYLLQHKGANLAFILSLQNQSYIIKISNTSHDLFSYNTKSNNNWFSDIIFNLLTDKSIKKITYSLKPLLKFYANQSHDITAIEDLELMQYALSAGLSQKNLFKEVLKETWIENIIIESAKIVINFIALYKQTIWELKDNKTFRLYSNIDLPICFILDKMEKVGITVDANYLKQLSAEFGTEILKLEEEIFALSGTKFNIGSPKQLGEILFEKMQLPFGKASAKASSYSTGAEILEKLSEHGYNIADLLLRWRQLTKLKNTYTDSLPKQIDNITHRVHTTFLQTSTTTGRLSSQEPNLQNVPIRSSEGNQIRKAFIAEEGYKLISADYSQIELRILSHIANIDALKQAFINKDDIHTQTACQIFNLQKHELTSEHRRKAKAINFGIIYGISAFGLAKQLNVTNGEASEYIKKYFAEYKGVQEYMEQTKAFASSNGYVTNCFGRKCFVPLIHDKKLKQFAERAAINAPIQGTNTDIIKIAMINLDQEIEKRKLKTRLVLQIHDELLFEAPIDEVEIITPIIKKIMENSTNMAVPIITEIRAGNNWMEIH</sequence>
<dbReference type="EC" id="2.7.7.7" evidence="1"/>
<dbReference type="EMBL" id="AE006914">
    <property type="protein sequence ID" value="AAL03744.1"/>
    <property type="molecule type" value="Genomic_DNA"/>
</dbReference>
<dbReference type="PIR" id="F97850">
    <property type="entry name" value="F97850"/>
</dbReference>
<dbReference type="RefSeq" id="WP_010977771.1">
    <property type="nucleotide sequence ID" value="NC_003103.1"/>
</dbReference>
<dbReference type="SMR" id="Q92GB7"/>
<dbReference type="GeneID" id="928359"/>
<dbReference type="KEGG" id="rco:RC1206"/>
<dbReference type="PATRIC" id="fig|272944.4.peg.1381"/>
<dbReference type="HOGENOM" id="CLU_004675_0_0_5"/>
<dbReference type="Proteomes" id="UP000000816">
    <property type="component" value="Chromosome"/>
</dbReference>
<dbReference type="GO" id="GO:0008409">
    <property type="term" value="F:5'-3' exonuclease activity"/>
    <property type="evidence" value="ECO:0007669"/>
    <property type="project" value="InterPro"/>
</dbReference>
<dbReference type="GO" id="GO:0003677">
    <property type="term" value="F:DNA binding"/>
    <property type="evidence" value="ECO:0007669"/>
    <property type="project" value="UniProtKB-KW"/>
</dbReference>
<dbReference type="GO" id="GO:0003887">
    <property type="term" value="F:DNA-directed DNA polymerase activity"/>
    <property type="evidence" value="ECO:0007669"/>
    <property type="project" value="UniProtKB-KW"/>
</dbReference>
<dbReference type="GO" id="GO:0006261">
    <property type="term" value="P:DNA-templated DNA replication"/>
    <property type="evidence" value="ECO:0007669"/>
    <property type="project" value="InterPro"/>
</dbReference>
<dbReference type="GO" id="GO:0006302">
    <property type="term" value="P:double-strand break repair"/>
    <property type="evidence" value="ECO:0007669"/>
    <property type="project" value="TreeGrafter"/>
</dbReference>
<dbReference type="CDD" id="cd08637">
    <property type="entry name" value="DNA_pol_A_pol_I_C"/>
    <property type="match status" value="1"/>
</dbReference>
<dbReference type="CDD" id="cd09898">
    <property type="entry name" value="H3TH_53EXO"/>
    <property type="match status" value="1"/>
</dbReference>
<dbReference type="CDD" id="cd09859">
    <property type="entry name" value="PIN_53EXO"/>
    <property type="match status" value="1"/>
</dbReference>
<dbReference type="FunFam" id="1.10.150.20:FF:000002">
    <property type="entry name" value="DNA polymerase I"/>
    <property type="match status" value="1"/>
</dbReference>
<dbReference type="FunFam" id="1.10.150.20:FF:000003">
    <property type="entry name" value="DNA polymerase I"/>
    <property type="match status" value="1"/>
</dbReference>
<dbReference type="FunFam" id="1.20.1060.10:FF:000001">
    <property type="entry name" value="DNA polymerase I"/>
    <property type="match status" value="1"/>
</dbReference>
<dbReference type="FunFam" id="3.40.50.1010:FF:000001">
    <property type="entry name" value="DNA polymerase I"/>
    <property type="match status" value="1"/>
</dbReference>
<dbReference type="Gene3D" id="3.30.70.370">
    <property type="match status" value="1"/>
</dbReference>
<dbReference type="Gene3D" id="1.10.150.20">
    <property type="entry name" value="5' to 3' exonuclease, C-terminal subdomain"/>
    <property type="match status" value="2"/>
</dbReference>
<dbReference type="Gene3D" id="3.40.50.1010">
    <property type="entry name" value="5'-nuclease"/>
    <property type="match status" value="1"/>
</dbReference>
<dbReference type="Gene3D" id="3.30.420.10">
    <property type="entry name" value="Ribonuclease H-like superfamily/Ribonuclease H"/>
    <property type="match status" value="1"/>
</dbReference>
<dbReference type="Gene3D" id="1.20.1060.10">
    <property type="entry name" value="Taq DNA Polymerase, Chain T, domain 4"/>
    <property type="match status" value="1"/>
</dbReference>
<dbReference type="InterPro" id="IPR020046">
    <property type="entry name" value="5-3_exonucl_a-hlix_arch_N"/>
</dbReference>
<dbReference type="InterPro" id="IPR002421">
    <property type="entry name" value="5-3_exonuclease"/>
</dbReference>
<dbReference type="InterPro" id="IPR036279">
    <property type="entry name" value="5-3_exonuclease_C_sf"/>
</dbReference>
<dbReference type="InterPro" id="IPR019760">
    <property type="entry name" value="DNA-dir_DNA_pol_A_CS"/>
</dbReference>
<dbReference type="InterPro" id="IPR001098">
    <property type="entry name" value="DNA-dir_DNA_pol_A_palm_dom"/>
</dbReference>
<dbReference type="InterPro" id="IPR043502">
    <property type="entry name" value="DNA/RNA_pol_sf"/>
</dbReference>
<dbReference type="InterPro" id="IPR020045">
    <property type="entry name" value="DNA_polI_H3TH"/>
</dbReference>
<dbReference type="InterPro" id="IPR018320">
    <property type="entry name" value="DNA_polymerase_1"/>
</dbReference>
<dbReference type="InterPro" id="IPR002298">
    <property type="entry name" value="DNA_polymerase_A"/>
</dbReference>
<dbReference type="InterPro" id="IPR008918">
    <property type="entry name" value="HhH2"/>
</dbReference>
<dbReference type="InterPro" id="IPR029060">
    <property type="entry name" value="PIN-like_dom_sf"/>
</dbReference>
<dbReference type="InterPro" id="IPR036397">
    <property type="entry name" value="RNaseH_sf"/>
</dbReference>
<dbReference type="NCBIfam" id="TIGR00593">
    <property type="entry name" value="pola"/>
    <property type="match status" value="1"/>
</dbReference>
<dbReference type="NCBIfam" id="NF004397">
    <property type="entry name" value="PRK05755.1"/>
    <property type="match status" value="1"/>
</dbReference>
<dbReference type="PANTHER" id="PTHR10133">
    <property type="entry name" value="DNA POLYMERASE I"/>
    <property type="match status" value="1"/>
</dbReference>
<dbReference type="PANTHER" id="PTHR10133:SF27">
    <property type="entry name" value="DNA POLYMERASE NU"/>
    <property type="match status" value="1"/>
</dbReference>
<dbReference type="Pfam" id="PF01367">
    <property type="entry name" value="5_3_exonuc"/>
    <property type="match status" value="1"/>
</dbReference>
<dbReference type="Pfam" id="PF02739">
    <property type="entry name" value="5_3_exonuc_N"/>
    <property type="match status" value="1"/>
</dbReference>
<dbReference type="Pfam" id="PF00476">
    <property type="entry name" value="DNA_pol_A"/>
    <property type="match status" value="1"/>
</dbReference>
<dbReference type="PRINTS" id="PR00868">
    <property type="entry name" value="DNAPOLI"/>
</dbReference>
<dbReference type="SMART" id="SM00475">
    <property type="entry name" value="53EXOc"/>
    <property type="match status" value="1"/>
</dbReference>
<dbReference type="SMART" id="SM00279">
    <property type="entry name" value="HhH2"/>
    <property type="match status" value="1"/>
</dbReference>
<dbReference type="SMART" id="SM00482">
    <property type="entry name" value="POLAc"/>
    <property type="match status" value="1"/>
</dbReference>
<dbReference type="SUPFAM" id="SSF47807">
    <property type="entry name" value="5' to 3' exonuclease, C-terminal subdomain"/>
    <property type="match status" value="1"/>
</dbReference>
<dbReference type="SUPFAM" id="SSF56672">
    <property type="entry name" value="DNA/RNA polymerases"/>
    <property type="match status" value="1"/>
</dbReference>
<dbReference type="SUPFAM" id="SSF88723">
    <property type="entry name" value="PIN domain-like"/>
    <property type="match status" value="1"/>
</dbReference>
<dbReference type="PROSITE" id="PS00447">
    <property type="entry name" value="DNA_POLYMERASE_A"/>
    <property type="match status" value="1"/>
</dbReference>
<feature type="chain" id="PRO_0000280950" description="DNA polymerase I">
    <location>
        <begin position="1"/>
        <end position="875"/>
    </location>
</feature>
<feature type="domain" description="5'-3' exonuclease">
    <location>
        <begin position="1"/>
        <end position="283"/>
    </location>
</feature>
<evidence type="ECO:0000250" key="1">
    <source>
        <dbReference type="UniProtKB" id="P52026"/>
    </source>
</evidence>
<evidence type="ECO:0000305" key="2"/>
<name>DPO1_RICCN</name>
<protein>
    <recommendedName>
        <fullName>DNA polymerase I</fullName>
        <shortName>POL I</shortName>
        <ecNumber evidence="1">2.7.7.7</ecNumber>
    </recommendedName>
</protein>
<gene>
    <name type="primary">polA</name>
    <name type="ordered locus">RC1206</name>
</gene>
<proteinExistence type="inferred from homology"/>
<comment type="function">
    <text evidence="1">In addition to polymerase activity, this DNA polymerase exhibits 5'-3' exonuclease activity.</text>
</comment>
<comment type="catalytic activity">
    <reaction evidence="1">
        <text>DNA(n) + a 2'-deoxyribonucleoside 5'-triphosphate = DNA(n+1) + diphosphate</text>
        <dbReference type="Rhea" id="RHEA:22508"/>
        <dbReference type="Rhea" id="RHEA-COMP:17339"/>
        <dbReference type="Rhea" id="RHEA-COMP:17340"/>
        <dbReference type="ChEBI" id="CHEBI:33019"/>
        <dbReference type="ChEBI" id="CHEBI:61560"/>
        <dbReference type="ChEBI" id="CHEBI:173112"/>
        <dbReference type="EC" id="2.7.7.7"/>
    </reaction>
</comment>
<comment type="subunit">
    <text evidence="1">Single-chain monomer with multiple functions.</text>
</comment>
<comment type="similarity">
    <text evidence="2">Belongs to the DNA polymerase type-A family.</text>
</comment>
<reference key="1">
    <citation type="journal article" date="2001" name="Science">
        <title>Mechanisms of evolution in Rickettsia conorii and R. prowazekii.</title>
        <authorList>
            <person name="Ogata H."/>
            <person name="Audic S."/>
            <person name="Renesto-Audiffren P."/>
            <person name="Fournier P.-E."/>
            <person name="Barbe V."/>
            <person name="Samson D."/>
            <person name="Roux V."/>
            <person name="Cossart P."/>
            <person name="Weissenbach J."/>
            <person name="Claverie J.-M."/>
            <person name="Raoult D."/>
        </authorList>
    </citation>
    <scope>NUCLEOTIDE SEQUENCE [LARGE SCALE GENOMIC DNA]</scope>
    <source>
        <strain>ATCC VR-613 / Malish 7</strain>
    </source>
</reference>